<dbReference type="EC" id="3.5.3.23" evidence="1"/>
<dbReference type="EMBL" id="CU928162">
    <property type="protein sequence ID" value="CAR08140.2"/>
    <property type="molecule type" value="Genomic_DNA"/>
</dbReference>
<dbReference type="RefSeq" id="WP_000994982.1">
    <property type="nucleotide sequence ID" value="NC_011745.1"/>
</dbReference>
<dbReference type="SMR" id="B7MVM4"/>
<dbReference type="KEGG" id="ecq:ECED1_1947"/>
<dbReference type="HOGENOM" id="CLU_053835_0_0_6"/>
<dbReference type="UniPathway" id="UPA00185">
    <property type="reaction ID" value="UER00280"/>
</dbReference>
<dbReference type="Proteomes" id="UP000000748">
    <property type="component" value="Chromosome"/>
</dbReference>
<dbReference type="GO" id="GO:0009015">
    <property type="term" value="F:N-succinylarginine dihydrolase activity"/>
    <property type="evidence" value="ECO:0007669"/>
    <property type="project" value="UniProtKB-UniRule"/>
</dbReference>
<dbReference type="GO" id="GO:0019544">
    <property type="term" value="P:arginine catabolic process to glutamate"/>
    <property type="evidence" value="ECO:0007669"/>
    <property type="project" value="UniProtKB-UniRule"/>
</dbReference>
<dbReference type="GO" id="GO:0019545">
    <property type="term" value="P:arginine catabolic process to succinate"/>
    <property type="evidence" value="ECO:0007669"/>
    <property type="project" value="UniProtKB-UniRule"/>
</dbReference>
<dbReference type="FunFam" id="3.75.10.20:FF:000001">
    <property type="entry name" value="N-succinylarginine dihydrolase"/>
    <property type="match status" value="1"/>
</dbReference>
<dbReference type="Gene3D" id="3.75.10.20">
    <property type="entry name" value="Succinylarginine dihydrolase"/>
    <property type="match status" value="1"/>
</dbReference>
<dbReference type="HAMAP" id="MF_01172">
    <property type="entry name" value="AstB"/>
    <property type="match status" value="1"/>
</dbReference>
<dbReference type="InterPro" id="IPR037031">
    <property type="entry name" value="AstB_sf"/>
</dbReference>
<dbReference type="InterPro" id="IPR007079">
    <property type="entry name" value="SuccinylArg_d-Hdrlase_AstB"/>
</dbReference>
<dbReference type="NCBIfam" id="TIGR03241">
    <property type="entry name" value="arg_catab_astB"/>
    <property type="match status" value="1"/>
</dbReference>
<dbReference type="NCBIfam" id="NF009789">
    <property type="entry name" value="PRK13281.1"/>
    <property type="match status" value="1"/>
</dbReference>
<dbReference type="PANTHER" id="PTHR30420">
    <property type="entry name" value="N-SUCCINYLARGININE DIHYDROLASE"/>
    <property type="match status" value="1"/>
</dbReference>
<dbReference type="PANTHER" id="PTHR30420:SF2">
    <property type="entry name" value="N-SUCCINYLARGININE DIHYDROLASE"/>
    <property type="match status" value="1"/>
</dbReference>
<dbReference type="Pfam" id="PF04996">
    <property type="entry name" value="AstB"/>
    <property type="match status" value="1"/>
</dbReference>
<dbReference type="SUPFAM" id="SSF55909">
    <property type="entry name" value="Pentein"/>
    <property type="match status" value="1"/>
</dbReference>
<proteinExistence type="inferred from homology"/>
<reference key="1">
    <citation type="journal article" date="2009" name="PLoS Genet.">
        <title>Organised genome dynamics in the Escherichia coli species results in highly diverse adaptive paths.</title>
        <authorList>
            <person name="Touchon M."/>
            <person name="Hoede C."/>
            <person name="Tenaillon O."/>
            <person name="Barbe V."/>
            <person name="Baeriswyl S."/>
            <person name="Bidet P."/>
            <person name="Bingen E."/>
            <person name="Bonacorsi S."/>
            <person name="Bouchier C."/>
            <person name="Bouvet O."/>
            <person name="Calteau A."/>
            <person name="Chiapello H."/>
            <person name="Clermont O."/>
            <person name="Cruveiller S."/>
            <person name="Danchin A."/>
            <person name="Diard M."/>
            <person name="Dossat C."/>
            <person name="Karoui M.E."/>
            <person name="Frapy E."/>
            <person name="Garry L."/>
            <person name="Ghigo J.M."/>
            <person name="Gilles A.M."/>
            <person name="Johnson J."/>
            <person name="Le Bouguenec C."/>
            <person name="Lescat M."/>
            <person name="Mangenot S."/>
            <person name="Martinez-Jehanne V."/>
            <person name="Matic I."/>
            <person name="Nassif X."/>
            <person name="Oztas S."/>
            <person name="Petit M.A."/>
            <person name="Pichon C."/>
            <person name="Rouy Z."/>
            <person name="Ruf C.S."/>
            <person name="Schneider D."/>
            <person name="Tourret J."/>
            <person name="Vacherie B."/>
            <person name="Vallenet D."/>
            <person name="Medigue C."/>
            <person name="Rocha E.P.C."/>
            <person name="Denamur E."/>
        </authorList>
    </citation>
    <scope>NUCLEOTIDE SEQUENCE [LARGE SCALE GENOMIC DNA]</scope>
    <source>
        <strain>ED1a</strain>
    </source>
</reference>
<organism>
    <name type="scientific">Escherichia coli O81 (strain ED1a)</name>
    <dbReference type="NCBI Taxonomy" id="585397"/>
    <lineage>
        <taxon>Bacteria</taxon>
        <taxon>Pseudomonadati</taxon>
        <taxon>Pseudomonadota</taxon>
        <taxon>Gammaproteobacteria</taxon>
        <taxon>Enterobacterales</taxon>
        <taxon>Enterobacteriaceae</taxon>
        <taxon>Escherichia</taxon>
    </lineage>
</organism>
<protein>
    <recommendedName>
        <fullName evidence="1">N-succinylarginine dihydrolase</fullName>
        <ecNumber evidence="1">3.5.3.23</ecNumber>
    </recommendedName>
</protein>
<accession>B7MVM4</accession>
<keyword id="KW-0056">Arginine metabolism</keyword>
<keyword id="KW-0378">Hydrolase</keyword>
<feature type="chain" id="PRO_1000164370" description="N-succinylarginine dihydrolase">
    <location>
        <begin position="1"/>
        <end position="447"/>
    </location>
</feature>
<feature type="active site" evidence="1">
    <location>
        <position position="174"/>
    </location>
</feature>
<feature type="active site" evidence="1">
    <location>
        <position position="248"/>
    </location>
</feature>
<feature type="active site" description="Nucleophile" evidence="1">
    <location>
        <position position="365"/>
    </location>
</feature>
<feature type="binding site" evidence="1">
    <location>
        <begin position="19"/>
        <end position="28"/>
    </location>
    <ligand>
        <name>substrate</name>
    </ligand>
</feature>
<feature type="binding site" evidence="1">
    <location>
        <position position="110"/>
    </location>
    <ligand>
        <name>substrate</name>
    </ligand>
</feature>
<feature type="binding site" evidence="1">
    <location>
        <begin position="137"/>
        <end position="138"/>
    </location>
    <ligand>
        <name>substrate</name>
    </ligand>
</feature>
<feature type="binding site" evidence="1">
    <location>
        <position position="212"/>
    </location>
    <ligand>
        <name>substrate</name>
    </ligand>
</feature>
<feature type="binding site" evidence="1">
    <location>
        <position position="250"/>
    </location>
    <ligand>
        <name>substrate</name>
    </ligand>
</feature>
<feature type="binding site" evidence="1">
    <location>
        <position position="359"/>
    </location>
    <ligand>
        <name>substrate</name>
    </ligand>
</feature>
<sequence length="447" mass="49410">MNAWEVNFDGLVGLTHHYAGLSFGNEASTRHRFQVSNPRLAAKQGLLKMKKLADAGFPQAVIPPHERPFIPVLRQLGFSGSDEQVLEKVARQAPHWLSSVSSASPMWVANAATIAPSADTLDGKVHLTVANLNNKFHRSLEAPVTESLLKAIFNDEEKFSVHSALPQVALLGDEGAANHNRLGGHYGEPGMQLFVYGREEGNDTRPSRYPARQTREASEAVARLNQVNPQQVIFAQQNPDVIDQGVFHNDVIAVSNRQVLFCHQQAFARQSQLLANLRARVNGFMAIEVPATQVSVSDAVSTYLFNSQLLSRDDGSMVLVLPQECREHAGVWRYLNELLAADNPISELKVFDLRESMANGGGPACLRLRVVLTEEERRAVNPAVMMNDTLFNALNDWVDRYYRDRLTAADLADPQLLREGREALDTLTQLLDLGSVYPFQREGGGNG</sequence>
<evidence type="ECO:0000255" key="1">
    <source>
        <dbReference type="HAMAP-Rule" id="MF_01172"/>
    </source>
</evidence>
<name>ASTB_ECO81</name>
<gene>
    <name evidence="1" type="primary">astB</name>
    <name type="ordered locus">ECED1_1947</name>
</gene>
<comment type="function">
    <text evidence="1">Catalyzes the hydrolysis of N(2)-succinylarginine into N(2)-succinylornithine, ammonia and CO(2).</text>
</comment>
<comment type="catalytic activity">
    <reaction evidence="1">
        <text>N(2)-succinyl-L-arginine + 2 H2O + 2 H(+) = N(2)-succinyl-L-ornithine + 2 NH4(+) + CO2</text>
        <dbReference type="Rhea" id="RHEA:19533"/>
        <dbReference type="ChEBI" id="CHEBI:15377"/>
        <dbReference type="ChEBI" id="CHEBI:15378"/>
        <dbReference type="ChEBI" id="CHEBI:16526"/>
        <dbReference type="ChEBI" id="CHEBI:28938"/>
        <dbReference type="ChEBI" id="CHEBI:58241"/>
        <dbReference type="ChEBI" id="CHEBI:58514"/>
        <dbReference type="EC" id="3.5.3.23"/>
    </reaction>
</comment>
<comment type="pathway">
    <text evidence="1">Amino-acid degradation; L-arginine degradation via AST pathway; L-glutamate and succinate from L-arginine: step 2/5.</text>
</comment>
<comment type="subunit">
    <text evidence="1">Homodimer.</text>
</comment>
<comment type="similarity">
    <text evidence="1">Belongs to the succinylarginine dihydrolase family.</text>
</comment>